<sequence length="407" mass="45303">MEPSISFVWGRWTVTVSNGLFSISNHEEIAPPATPFARLVHLPFSIESIIDQRISHGLVPTLLQLQQYTNSVPAVFSDYREQQACKPYVLPMFVSDFINPLIVFVKGGPIILRKNELKFHIVFISPIPRADISSFIFPPEDDTSKSLTLAGFGTKTENEINICGTTMKTEAGSYVMLFRCEKIPPFYNITSFDAKDSGLILETLLIQEVGADTYVMTVHLCGSPKPAHIEVQVHLTVLNSPTELVFKHALPWELAPSGGSVLPIYLEADKIIKPGNSVEICFSFVFNRGLVSSDQPALFVASSNHTTKYVVKPQIWYPITPLSITVYNPSNRIIFIKRGFCVAVAVPCFFHLKAPGQDCEERVILDRENSSIHWSDVLIKPGAGGPIVHVHHVALKEINLTEEPMNF</sequence>
<organism>
    <name type="scientific">Saimiriine herpesvirus 2 (strain 11)</name>
    <name type="common">SaHV-2</name>
    <name type="synonym">Herpesvirus saimiri</name>
    <dbReference type="NCBI Taxonomy" id="10383"/>
    <lineage>
        <taxon>Viruses</taxon>
        <taxon>Duplodnaviria</taxon>
        <taxon>Heunggongvirae</taxon>
        <taxon>Peploviricota</taxon>
        <taxon>Herviviricetes</taxon>
        <taxon>Herpesvirales</taxon>
        <taxon>Orthoherpesviridae</taxon>
        <taxon>Gammaherpesvirinae</taxon>
        <taxon>Rhadinovirus</taxon>
        <taxon>Rhadinovirus saimiriinegamma2</taxon>
        <taxon>Saimiriine herpesvirus 2</taxon>
    </lineage>
</organism>
<reference key="1">
    <citation type="journal article" date="1990" name="Virology">
        <title>Structural organization of the conserved gene block of Herpesvirus saimiri coding for DNA polymerase, glycoprotein B, and major DNA binding protein.</title>
        <authorList>
            <person name="Albrecht J.-C."/>
            <person name="Fleckenstein B."/>
        </authorList>
    </citation>
    <scope>NUCLEOTIDE SEQUENCE [GENOMIC DNA]</scope>
</reference>
<reference key="2">
    <citation type="journal article" date="1992" name="J. Virol.">
        <title>Primary structure of the herpesvirus saimiri genome.</title>
        <authorList>
            <person name="Albrecht J.-C."/>
            <person name="Nicholas J."/>
            <person name="Biller D."/>
            <person name="Cameron K.R."/>
            <person name="Biesinger B."/>
            <person name="Newman C."/>
            <person name="Wittmann S."/>
            <person name="Craxton M.A."/>
            <person name="Coleman H."/>
            <person name="Fleckenstein B."/>
            <person name="Honess R.W."/>
        </authorList>
    </citation>
    <scope>NUCLEOTIDE SEQUENCE [LARGE SCALE GENOMIC DNA]</scope>
</reference>
<organismHost>
    <name type="scientific">Saimiri sciureus</name>
    <name type="common">Common squirrel monkey</name>
    <dbReference type="NCBI Taxonomy" id="9521"/>
</organismHost>
<protein>
    <recommendedName>
        <fullName>Uncharacterized gene 10 protein</fullName>
    </recommendedName>
</protein>
<name>VG10_SHV21</name>
<accession>P24913</accession>
<gene>
    <name type="primary">10</name>
    <name type="synonym">KCRF3</name>
</gene>
<feature type="chain" id="PRO_0000116341" description="Uncharacterized gene 10 protein">
    <location>
        <begin position="1"/>
        <end position="407"/>
    </location>
</feature>
<dbReference type="EMBL" id="X64346">
    <property type="protein sequence ID" value="CAA45633.1"/>
    <property type="molecule type" value="Genomic_DNA"/>
</dbReference>
<dbReference type="EMBL" id="M31122">
    <property type="protein sequence ID" value="AAA46166.1"/>
    <property type="molecule type" value="Genomic_DNA"/>
</dbReference>
<dbReference type="RefSeq" id="NP_040212.1">
    <property type="nucleotide sequence ID" value="NC_001350.1"/>
</dbReference>
<dbReference type="SMR" id="P24913"/>
<dbReference type="KEGG" id="vg:1682501"/>
<dbReference type="Proteomes" id="UP000000587">
    <property type="component" value="Segment"/>
</dbReference>
<dbReference type="InterPro" id="IPR006882">
    <property type="entry name" value="Herpes_Orf11"/>
</dbReference>
<dbReference type="Pfam" id="PF04797">
    <property type="entry name" value="Herpes_ORF11"/>
    <property type="match status" value="1"/>
</dbReference>
<keyword id="KW-1185">Reference proteome</keyword>
<proteinExistence type="predicted"/>